<protein>
    <recommendedName>
        <fullName evidence="4">XK-related protein 6</fullName>
    </recommendedName>
</protein>
<reference key="1">
    <citation type="submission" date="2004-07" db="EMBL/GenBank/DDBJ databases">
        <title>A superfamily of XK-related genes (XRG) widely expressed in vertebrates and invertebrates.</title>
        <authorList>
            <person name="Huang C.-H."/>
            <person name="Chen Y."/>
        </authorList>
    </citation>
    <scope>NUCLEOTIDE SEQUENCE [MRNA]</scope>
</reference>
<reference key="2">
    <citation type="journal article" date="2004" name="Nature">
        <title>Genome duplication in the teleost fish Tetraodon nigroviridis reveals the early vertebrate proto-karyotype.</title>
        <authorList>
            <person name="Jaillon O."/>
            <person name="Aury J.-M."/>
            <person name="Brunet F."/>
            <person name="Petit J.-L."/>
            <person name="Stange-Thomann N."/>
            <person name="Mauceli E."/>
            <person name="Bouneau L."/>
            <person name="Fischer C."/>
            <person name="Ozouf-Costaz C."/>
            <person name="Bernot A."/>
            <person name="Nicaud S."/>
            <person name="Jaffe D."/>
            <person name="Fisher S."/>
            <person name="Lutfalla G."/>
            <person name="Dossat C."/>
            <person name="Segurens B."/>
            <person name="Dasilva C."/>
            <person name="Salanoubat M."/>
            <person name="Levy M."/>
            <person name="Boudet N."/>
            <person name="Castellano S."/>
            <person name="Anthouard V."/>
            <person name="Jubin C."/>
            <person name="Castelli V."/>
            <person name="Katinka M."/>
            <person name="Vacherie B."/>
            <person name="Biemont C."/>
            <person name="Skalli Z."/>
            <person name="Cattolico L."/>
            <person name="Poulain J."/>
            <person name="De Berardinis V."/>
            <person name="Cruaud C."/>
            <person name="Duprat S."/>
            <person name="Brottier P."/>
            <person name="Coutanceau J.-P."/>
            <person name="Gouzy J."/>
            <person name="Parra G."/>
            <person name="Lardier G."/>
            <person name="Chapple C."/>
            <person name="McKernan K.J."/>
            <person name="McEwan P."/>
            <person name="Bosak S."/>
            <person name="Kellis M."/>
            <person name="Volff J.-N."/>
            <person name="Guigo R."/>
            <person name="Zody M.C."/>
            <person name="Mesirov J."/>
            <person name="Lindblad-Toh K."/>
            <person name="Birren B."/>
            <person name="Nusbaum C."/>
            <person name="Kahn D."/>
            <person name="Robinson-Rechavi M."/>
            <person name="Laudet V."/>
            <person name="Schachter V."/>
            <person name="Quetier F."/>
            <person name="Saurin W."/>
            <person name="Scarpelli C."/>
            <person name="Wincker P."/>
            <person name="Lander E.S."/>
            <person name="Weissenbach J."/>
            <person name="Roest Crollius H."/>
        </authorList>
    </citation>
    <scope>NUCLEOTIDE SEQUENCE [LARGE SCALE GENOMIC DNA]</scope>
</reference>
<sequence length="578" mass="65969">MAAKSDGRGVVTGFAQLHNLDEVVGTGEDDARNGSSFHICHCCNTSSCYWGCRSACLHYLRAKGKGEGKETARPTPEERLWLDCLWIVLALLVFFWDVGTDLWLAVDYYHKQDFLWSGLTLFFVLVPSVLVQILSFRWFVQDYTGGGLGSVEGLSSRRAAASLQRDKCCRLSVWIWQTVIHIFQLGQVWRYIRTMYLGIQSHRQKENQRRFYWAMMYEYADVNMLRLLETFLESAPQLVLQLCIMIQSNKAEWLQCVSALSSLLSLAWVLASYHKLLRDSRDDKKSMSYRGALVHLFWRLFTISSRVLSLALFASVFHIYFGIFVVLHWCAMAFWVIHGGTDFCMSKWEEVLFNMVVGVVYVFCWFNVREGRTRYRMVAYYVVVLLENVILTSLWYAYRDPATTDAYASLALCGVFLCFASGVACMVLYYGVLHPMGPRLRVLASSCCAELLWGLPLPPEAEPMAPTPGPRGSQATPTRGLTGEYAESDETATDTCLPVFQVRSTEPVDAAGRPIQPEGPFIKIDMPRKRYPAWDAHFVDRRLRRTVNVLQYISPNAAGIRYRDGPLLYELLQYESSL</sequence>
<accession>Q49LS8</accession>
<accession>Q4RR79</accession>
<accession>Q4RR80</accession>
<organism>
    <name type="scientific">Tetraodon nigroviridis</name>
    <name type="common">Spotted green pufferfish</name>
    <name type="synonym">Chelonodon nigroviridis</name>
    <dbReference type="NCBI Taxonomy" id="99883"/>
    <lineage>
        <taxon>Eukaryota</taxon>
        <taxon>Metazoa</taxon>
        <taxon>Chordata</taxon>
        <taxon>Craniata</taxon>
        <taxon>Vertebrata</taxon>
        <taxon>Euteleostomi</taxon>
        <taxon>Actinopterygii</taxon>
        <taxon>Neopterygii</taxon>
        <taxon>Teleostei</taxon>
        <taxon>Neoteleostei</taxon>
        <taxon>Acanthomorphata</taxon>
        <taxon>Eupercaria</taxon>
        <taxon>Tetraodontiformes</taxon>
        <taxon>Tetradontoidea</taxon>
        <taxon>Tetraodontidae</taxon>
        <taxon>Tetraodon</taxon>
    </lineage>
</organism>
<keyword id="KW-1003">Cell membrane</keyword>
<keyword id="KW-0472">Membrane</keyword>
<keyword id="KW-1185">Reference proteome</keyword>
<keyword id="KW-0812">Transmembrane</keyword>
<keyword id="KW-1133">Transmembrane helix</keyword>
<feature type="chain" id="PRO_0000190787" description="XK-related protein 6">
    <location>
        <begin position="1"/>
        <end position="578"/>
    </location>
</feature>
<feature type="transmembrane region" description="Helical" evidence="2">
    <location>
        <begin position="86"/>
        <end position="106"/>
    </location>
</feature>
<feature type="transmembrane region" description="Helical" evidence="2">
    <location>
        <begin position="114"/>
        <end position="134"/>
    </location>
</feature>
<feature type="transmembrane region" description="Helical" evidence="2">
    <location>
        <begin position="253"/>
        <end position="273"/>
    </location>
</feature>
<feature type="transmembrane region" description="Helical" evidence="2">
    <location>
        <begin position="307"/>
        <end position="327"/>
    </location>
</feature>
<feature type="transmembrane region" description="Helical" evidence="2">
    <location>
        <begin position="348"/>
        <end position="368"/>
    </location>
</feature>
<feature type="transmembrane region" description="Helical" evidence="2">
    <location>
        <begin position="377"/>
        <end position="397"/>
    </location>
</feature>
<feature type="transmembrane region" description="Helical" evidence="2">
    <location>
        <begin position="410"/>
        <end position="430"/>
    </location>
</feature>
<comment type="subcellular location">
    <subcellularLocation>
        <location evidence="1">Cell membrane</location>
        <topology evidence="2">Multi-pass membrane protein</topology>
    </subcellularLocation>
</comment>
<comment type="similarity">
    <text evidence="4">Belongs to the XK family.</text>
</comment>
<comment type="sequence caution" evidence="4">
    <conflict type="erroneous gene model prediction">
        <sequence resource="EMBL-CDS" id="CAG09102"/>
    </conflict>
</comment>
<comment type="sequence caution" evidence="4">
    <conflict type="erroneous gene model prediction">
        <sequence resource="EMBL-CDS" id="CAG09103"/>
    </conflict>
</comment>
<dbReference type="EMBL" id="AY702901">
    <property type="protein sequence ID" value="AAU94454.1"/>
    <property type="molecule type" value="mRNA"/>
</dbReference>
<dbReference type="EMBL" id="CAAE01015003">
    <property type="protein sequence ID" value="CAG09103.1"/>
    <property type="status" value="ALT_SEQ"/>
    <property type="molecule type" value="Genomic_DNA"/>
</dbReference>
<dbReference type="EMBL" id="CAAE01015003">
    <property type="protein sequence ID" value="CAG09102.1"/>
    <property type="status" value="ALT_SEQ"/>
    <property type="molecule type" value="Genomic_DNA"/>
</dbReference>
<dbReference type="SMR" id="Q49LS8"/>
<dbReference type="FunCoup" id="Q49LS8">
    <property type="interactions" value="322"/>
</dbReference>
<dbReference type="STRING" id="99883.ENSTNIP00000019426"/>
<dbReference type="KEGG" id="tng:GSTEN00030285G001"/>
<dbReference type="KEGG" id="tng:GSTEN00030286G001"/>
<dbReference type="HOGENOM" id="CLU_028534_1_0_1"/>
<dbReference type="InParanoid" id="Q49LS8"/>
<dbReference type="OrthoDB" id="6356248at2759"/>
<dbReference type="Proteomes" id="UP000007303">
    <property type="component" value="Unassembled WGS sequence"/>
</dbReference>
<dbReference type="GO" id="GO:0005886">
    <property type="term" value="C:plasma membrane"/>
    <property type="evidence" value="ECO:0007669"/>
    <property type="project" value="UniProtKB-SubCell"/>
</dbReference>
<dbReference type="GO" id="GO:1902742">
    <property type="term" value="P:apoptotic process involved in development"/>
    <property type="evidence" value="ECO:0007669"/>
    <property type="project" value="TreeGrafter"/>
</dbReference>
<dbReference type="GO" id="GO:0043652">
    <property type="term" value="P:engulfment of apoptotic cell"/>
    <property type="evidence" value="ECO:0007669"/>
    <property type="project" value="TreeGrafter"/>
</dbReference>
<dbReference type="GO" id="GO:0070782">
    <property type="term" value="P:phosphatidylserine exposure on apoptotic cell surface"/>
    <property type="evidence" value="ECO:0007669"/>
    <property type="project" value="TreeGrafter"/>
</dbReference>
<dbReference type="InterPro" id="IPR018629">
    <property type="entry name" value="XK-rel"/>
</dbReference>
<dbReference type="InterPro" id="IPR050895">
    <property type="entry name" value="XK-related_scramblase"/>
</dbReference>
<dbReference type="PANTHER" id="PTHR16024">
    <property type="entry name" value="XK-RELATED PROTEIN"/>
    <property type="match status" value="1"/>
</dbReference>
<dbReference type="PANTHER" id="PTHR16024:SF12">
    <property type="entry name" value="XK-RELATED PROTEIN"/>
    <property type="match status" value="1"/>
</dbReference>
<dbReference type="Pfam" id="PF09815">
    <property type="entry name" value="XK-related"/>
    <property type="match status" value="1"/>
</dbReference>
<gene>
    <name type="primary">xkr6</name>
    <name evidence="3" type="synonym">xrg6</name>
    <name type="ORF">GSTENG00030285001</name>
    <name type="ORF">GSTENG00030286001</name>
</gene>
<evidence type="ECO:0000250" key="1">
    <source>
        <dbReference type="UniProtKB" id="E9Q6C8"/>
    </source>
</evidence>
<evidence type="ECO:0000255" key="2"/>
<evidence type="ECO:0000303" key="3">
    <source ref="1"/>
</evidence>
<evidence type="ECO:0000305" key="4"/>
<name>XKR6_TETNG</name>
<proteinExistence type="evidence at transcript level"/>